<name>PVRIG_HUMAN</name>
<reference key="1">
    <citation type="submission" date="2005-09" db="EMBL/GenBank/DDBJ databases">
        <authorList>
            <person name="Mural R.J."/>
            <person name="Istrail S."/>
            <person name="Sutton G.G."/>
            <person name="Florea L."/>
            <person name="Halpern A.L."/>
            <person name="Mobarry C.M."/>
            <person name="Lippert R."/>
            <person name="Walenz B."/>
            <person name="Shatkay H."/>
            <person name="Dew I."/>
            <person name="Miller J.R."/>
            <person name="Flanigan M.J."/>
            <person name="Edwards N.J."/>
            <person name="Bolanos R."/>
            <person name="Fasulo D."/>
            <person name="Halldorsson B.V."/>
            <person name="Hannenhalli S."/>
            <person name="Turner R."/>
            <person name="Yooseph S."/>
            <person name="Lu F."/>
            <person name="Nusskern D.R."/>
            <person name="Shue B.C."/>
            <person name="Zheng X.H."/>
            <person name="Zhong F."/>
            <person name="Delcher A.L."/>
            <person name="Huson D.H."/>
            <person name="Kravitz S.A."/>
            <person name="Mouchard L."/>
            <person name="Reinert K."/>
            <person name="Remington K.A."/>
            <person name="Clark A.G."/>
            <person name="Waterman M.S."/>
            <person name="Eichler E.E."/>
            <person name="Adams M.D."/>
            <person name="Hunkapiller M.W."/>
            <person name="Myers E.W."/>
            <person name="Venter J.C."/>
        </authorList>
    </citation>
    <scope>NUCLEOTIDE SEQUENCE [LARGE SCALE GENOMIC DNA]</scope>
</reference>
<reference key="2">
    <citation type="journal article" date="2004" name="Genome Res.">
        <title>The status, quality, and expansion of the NIH full-length cDNA project: the Mammalian Gene Collection (MGC).</title>
        <authorList>
            <consortium name="The MGC Project Team"/>
        </authorList>
    </citation>
    <scope>NUCLEOTIDE SEQUENCE [LARGE SCALE MRNA]</scope>
    <scope>VARIANT ASP-81</scope>
    <source>
        <tissue>Lymph</tissue>
        <tissue>Pancreas</tissue>
    </source>
</reference>
<reference key="3">
    <citation type="journal article" date="2006" name="Physiol. Genomics">
        <title>Comparative analysis of the paired immunoglobulin-like receptor (PILR) locus in six mammalian genomes: duplication, conversion, and the birth of new genes.</title>
        <authorList>
            <person name="Wilson M.D."/>
            <person name="Cheung J."/>
            <person name="Martindale D.W."/>
            <person name="Scherer S.W."/>
            <person name="Koop B.F."/>
        </authorList>
    </citation>
    <scope>IDENTIFICATION</scope>
</reference>
<reference key="4">
    <citation type="journal article" date="2016" name="J. Exp. Med.">
        <title>Identification of CD112R as a novel checkpoint for human T cells.</title>
        <authorList>
            <person name="Zhu Y."/>
            <person name="Paniccia A."/>
            <person name="Schulick A.C."/>
            <person name="Chen W."/>
            <person name="Koenig M.R."/>
            <person name="Byers J.T."/>
            <person name="Yao S."/>
            <person name="Bevers S."/>
            <person name="Edil B.H."/>
        </authorList>
    </citation>
    <scope>FUNCTION AS NECTIN2 RECEPTOR</scope>
    <scope>INTERACTION WITH NECTIN2</scope>
    <scope>SUBCELLULAR LOCATION</scope>
    <scope>TISSUE SPECIFICITY</scope>
    <scope>INDUCTION</scope>
    <scope>PHOSPHORYLATION AT TYR-233</scope>
    <scope>MUTAGENESIS OF TYR-233 AND TYR-293</scope>
</reference>
<gene>
    <name type="primary">PVRIG</name>
    <name type="synonym">C7orf15</name>
</gene>
<accession>Q6DKI7</accession>
<accession>D6W5U9</accession>
<accession>Q9BVK3</accession>
<proteinExistence type="evidence at protein level"/>
<organism>
    <name type="scientific">Homo sapiens</name>
    <name type="common">Human</name>
    <dbReference type="NCBI Taxonomy" id="9606"/>
    <lineage>
        <taxon>Eukaryota</taxon>
        <taxon>Metazoa</taxon>
        <taxon>Chordata</taxon>
        <taxon>Craniata</taxon>
        <taxon>Vertebrata</taxon>
        <taxon>Euteleostomi</taxon>
        <taxon>Mammalia</taxon>
        <taxon>Eutheria</taxon>
        <taxon>Euarchontoglires</taxon>
        <taxon>Primates</taxon>
        <taxon>Haplorrhini</taxon>
        <taxon>Catarrhini</taxon>
        <taxon>Hominidae</taxon>
        <taxon>Homo</taxon>
    </lineage>
</organism>
<keyword id="KW-0002">3D-structure</keyword>
<keyword id="KW-1003">Cell membrane</keyword>
<keyword id="KW-0472">Membrane</keyword>
<keyword id="KW-0597">Phosphoprotein</keyword>
<keyword id="KW-1267">Proteomics identification</keyword>
<keyword id="KW-0675">Receptor</keyword>
<keyword id="KW-1185">Reference proteome</keyword>
<keyword id="KW-0812">Transmembrane</keyword>
<keyword id="KW-1133">Transmembrane helix</keyword>
<comment type="function">
    <text evidence="4">Cell surface receptor for NECTIN2. May act as a coinhibitory receptor that suppresses T-cell receptor-mediated signals. Following interaction with NECTIN2, inhibits T-cell proliferation. Competes with CD226 for NECTIN2-binding.</text>
</comment>
<comment type="subunit">
    <text evidence="4">Interacts with NECTIN2, hence competing with CD226.</text>
</comment>
<comment type="interaction">
    <interactant intactId="EBI-17964309">
        <id>Q6DKI7</id>
    </interactant>
    <interactant intactId="EBI-2804156">
        <id>Q6UX06</id>
        <label>OLFM4</label>
    </interactant>
    <organismsDiffer>false</organismsDiffer>
    <experiments>3</experiments>
</comment>
<comment type="subcellular location">
    <subcellularLocation>
        <location evidence="4">Cell membrane</location>
        <topology evidence="5">Multi-pass membrane protein</topology>
    </subcellularLocation>
</comment>
<comment type="tissue specificity">
    <text evidence="4">Expressed in some types of immune cells. Expressed at low levels on the surface of freshly isolated T-cells and natural killer (NK) cells, predominantly on CD8+ T-cells (mainly memory/effector, but not naive cells) and on both CD16+ and CD16- NK cells. T-cell expression levels are variable among individuals. Not detected in B-cells, naive or helper T-cells, monocytes, nor neutrophils (at protein level). Not detected in dendritic cells.</text>
</comment>
<comment type="induction">
    <text evidence="4">In T-cells, up-regulated by activation induced by treatment with anti-CD3 and anti-CD28 antibodies.</text>
</comment>
<comment type="miscellaneous">
    <text evidence="6">Was named PVRIG for the homology observed between its second exon and the variable immunoglobulin domain of the polio virus receptor (PVR/CD155) and polio virus receptor-like (PVRL) genes.</text>
</comment>
<dbReference type="EMBL" id="CH471091">
    <property type="protein sequence ID" value="EAW76566.1"/>
    <property type="molecule type" value="Genomic_DNA"/>
</dbReference>
<dbReference type="EMBL" id="CH471091">
    <property type="protein sequence ID" value="EAW76567.1"/>
    <property type="molecule type" value="Genomic_DNA"/>
</dbReference>
<dbReference type="EMBL" id="BC001129">
    <property type="protein sequence ID" value="AAH01129.1"/>
    <property type="molecule type" value="mRNA"/>
</dbReference>
<dbReference type="EMBL" id="BC073861">
    <property type="protein sequence ID" value="AAH73861.1"/>
    <property type="molecule type" value="mRNA"/>
</dbReference>
<dbReference type="EMBL" id="BC107873">
    <property type="protein sequence ID" value="AAI07874.1"/>
    <property type="molecule type" value="mRNA"/>
</dbReference>
<dbReference type="CCDS" id="CCDS5690.1"/>
<dbReference type="RefSeq" id="NP_076975.2">
    <property type="nucleotide sequence ID" value="NM_024070.3"/>
</dbReference>
<dbReference type="RefSeq" id="XP_011514877.1">
    <property type="nucleotide sequence ID" value="XM_011516575.2"/>
</dbReference>
<dbReference type="PDB" id="8X6B">
    <property type="method" value="X-ray"/>
    <property type="resolution" value="2.00 A"/>
    <property type="chains" value="B=39-154"/>
</dbReference>
<dbReference type="PDBsum" id="8X6B"/>
<dbReference type="SMR" id="Q6DKI7"/>
<dbReference type="BioGRID" id="299834">
    <property type="interactions" value="23"/>
</dbReference>
<dbReference type="FunCoup" id="Q6DKI7">
    <property type="interactions" value="227"/>
</dbReference>
<dbReference type="IntAct" id="Q6DKI7">
    <property type="interactions" value="16"/>
</dbReference>
<dbReference type="MINT" id="Q6DKI7"/>
<dbReference type="STRING" id="9606.ENSP00000316675"/>
<dbReference type="GlyGen" id="Q6DKI7">
    <property type="glycosylation" value="1 site"/>
</dbReference>
<dbReference type="iPTMnet" id="Q6DKI7"/>
<dbReference type="PhosphoSitePlus" id="Q6DKI7"/>
<dbReference type="BioMuta" id="PVRIG"/>
<dbReference type="DMDM" id="74736413"/>
<dbReference type="MassIVE" id="Q6DKI7"/>
<dbReference type="PaxDb" id="9606-ENSP00000316675"/>
<dbReference type="PeptideAtlas" id="Q6DKI7"/>
<dbReference type="ProteomicsDB" id="66232"/>
<dbReference type="Antibodypedia" id="30659">
    <property type="antibodies" value="207 antibodies from 26 providers"/>
</dbReference>
<dbReference type="DNASU" id="79037"/>
<dbReference type="Ensembl" id="ENST00000317271.3">
    <property type="protein sequence ID" value="ENSP00000316675.2"/>
    <property type="gene ID" value="ENSG00000213413.3"/>
</dbReference>
<dbReference type="GeneID" id="79037"/>
<dbReference type="KEGG" id="hsa:79037"/>
<dbReference type="UCSC" id="uc003uuf.2">
    <property type="organism name" value="human"/>
</dbReference>
<dbReference type="AGR" id="HGNC:32190"/>
<dbReference type="CTD" id="79037"/>
<dbReference type="DisGeNET" id="79037"/>
<dbReference type="GeneCards" id="PVRIG"/>
<dbReference type="HGNC" id="HGNC:32190">
    <property type="gene designation" value="PVRIG"/>
</dbReference>
<dbReference type="HPA" id="ENSG00000213413">
    <property type="expression patterns" value="Tissue enriched (lymphoid)"/>
</dbReference>
<dbReference type="MIM" id="617012">
    <property type="type" value="gene"/>
</dbReference>
<dbReference type="neXtProt" id="NX_Q6DKI7"/>
<dbReference type="OpenTargets" id="ENSG00000213413"/>
<dbReference type="PharmGKB" id="PA162400434"/>
<dbReference type="VEuPathDB" id="HostDB:ENSG00000213413"/>
<dbReference type="eggNOG" id="KOG4433">
    <property type="taxonomic scope" value="Eukaryota"/>
</dbReference>
<dbReference type="GeneTree" id="ENSGT00390000017799"/>
<dbReference type="HOGENOM" id="CLU_862017_0_0_1"/>
<dbReference type="InParanoid" id="Q6DKI7"/>
<dbReference type="OMA" id="GTQQWAP"/>
<dbReference type="OrthoDB" id="9666214at2759"/>
<dbReference type="PAN-GO" id="Q6DKI7">
    <property type="GO annotations" value="3 GO annotations based on evolutionary models"/>
</dbReference>
<dbReference type="PhylomeDB" id="Q6DKI7"/>
<dbReference type="TreeFam" id="TF343319"/>
<dbReference type="PathwayCommons" id="Q6DKI7"/>
<dbReference type="SignaLink" id="Q6DKI7"/>
<dbReference type="BioGRID-ORCS" id="79037">
    <property type="hits" value="15 hits in 1138 CRISPR screens"/>
</dbReference>
<dbReference type="ChiTaRS" id="PVRIG">
    <property type="organism name" value="human"/>
</dbReference>
<dbReference type="GenomeRNAi" id="79037"/>
<dbReference type="Pharos" id="Q6DKI7">
    <property type="development level" value="Tbio"/>
</dbReference>
<dbReference type="PRO" id="PR:Q6DKI7"/>
<dbReference type="Proteomes" id="UP000005640">
    <property type="component" value="Chromosome 7"/>
</dbReference>
<dbReference type="RNAct" id="Q6DKI7">
    <property type="molecule type" value="protein"/>
</dbReference>
<dbReference type="Bgee" id="ENSG00000213413">
    <property type="expression patterns" value="Expressed in granulocyte and 99 other cell types or tissues"/>
</dbReference>
<dbReference type="GO" id="GO:0005886">
    <property type="term" value="C:plasma membrane"/>
    <property type="evidence" value="ECO:0000314"/>
    <property type="project" value="UniProtKB"/>
</dbReference>
<dbReference type="GO" id="GO:0019902">
    <property type="term" value="F:phosphatase binding"/>
    <property type="evidence" value="ECO:0000353"/>
    <property type="project" value="UniProtKB"/>
</dbReference>
<dbReference type="GO" id="GO:0038023">
    <property type="term" value="F:signaling receptor activity"/>
    <property type="evidence" value="ECO:0000315"/>
    <property type="project" value="UniProtKB"/>
</dbReference>
<dbReference type="GO" id="GO:0050860">
    <property type="term" value="P:negative regulation of T cell receptor signaling pathway"/>
    <property type="evidence" value="ECO:0000315"/>
    <property type="project" value="UniProtKB"/>
</dbReference>
<dbReference type="InterPro" id="IPR034452">
    <property type="entry name" value="TM_PVRIG"/>
</dbReference>
<dbReference type="PANTHER" id="PTHR39220">
    <property type="entry name" value="TRANSMEMBRANE PROTEIN PVRIG"/>
    <property type="match status" value="1"/>
</dbReference>
<dbReference type="PANTHER" id="PTHR39220:SF1">
    <property type="entry name" value="TRANSMEMBRANE PROTEIN PVRIG"/>
    <property type="match status" value="1"/>
</dbReference>
<dbReference type="Pfam" id="PF25456">
    <property type="entry name" value="Ig_PVRIG"/>
    <property type="match status" value="1"/>
</dbReference>
<evidence type="ECO:0000255" key="1"/>
<evidence type="ECO:0000256" key="2">
    <source>
        <dbReference type="SAM" id="MobiDB-lite"/>
    </source>
</evidence>
<evidence type="ECO:0000269" key="3">
    <source>
    </source>
</evidence>
<evidence type="ECO:0000269" key="4">
    <source>
    </source>
</evidence>
<evidence type="ECO:0000305" key="5"/>
<evidence type="ECO:0000305" key="6">
    <source>
    </source>
</evidence>
<evidence type="ECO:0000305" key="7">
    <source>
    </source>
</evidence>
<evidence type="ECO:0007829" key="8">
    <source>
        <dbReference type="PDB" id="8X6B"/>
    </source>
</evidence>
<sequence>MRTEAQVPALQPPEPGLEGAMGHRTLVLPWVLLTLCVTAGTPEVWVQVRMEATELSSFTIRCGFLGSGSISLVTVSWGGPNGAGGTTLAVLHPERGIRQWAPARQARWETQSSISLILEGSGASSPCANTTFCCKFASFPEGSWEACGSLPPSSDPGLSAPPTPAPILRADLAGILGVSGVLLFGCVYLLHLLRRHKHRPAPRLQPSRTSPQAPRARAWAPSQASQAALHVPYATINTSCRPATLDTAHPHGGPSWWASLPTHAAHRPQGPAAWASTPIPARGSFVSVENGLYAQAGERPPHTGPGLTLFPDPRGPRAMEGPLGVR</sequence>
<feature type="chain" id="PRO_0000337142" description="Transmembrane protein PVRIG">
    <location>
        <begin position="1"/>
        <end position="326"/>
    </location>
</feature>
<feature type="transmembrane region" description="Helical" evidence="1">
    <location>
        <begin position="26"/>
        <end position="46"/>
    </location>
</feature>
<feature type="transmembrane region" description="Helical" evidence="1">
    <location>
        <begin position="62"/>
        <end position="78"/>
    </location>
</feature>
<feature type="transmembrane region" description="Helical" evidence="1">
    <location>
        <begin position="172"/>
        <end position="192"/>
    </location>
</feature>
<feature type="region of interest" description="Disordered" evidence="2">
    <location>
        <begin position="296"/>
        <end position="326"/>
    </location>
</feature>
<feature type="modified residue" description="Phosphotyrosine" evidence="7">
    <location>
        <position position="233"/>
    </location>
</feature>
<feature type="sequence variant" id="VAR_043624" description="In dbSNP:rs2906645." evidence="3">
    <original>N</original>
    <variation>D</variation>
    <location>
        <position position="81"/>
    </location>
</feature>
<feature type="mutagenesis site" description="Reduced phosphorylation." evidence="4">
    <original>Y</original>
    <variation>F</variation>
    <location>
        <position position="233"/>
    </location>
</feature>
<feature type="mutagenesis site" description="No effect on global phosphorylation." evidence="4">
    <original>Y</original>
    <variation>F</variation>
    <location>
        <position position="293"/>
    </location>
</feature>
<feature type="strand" evidence="8">
    <location>
        <begin position="43"/>
        <end position="50"/>
    </location>
</feature>
<feature type="strand" evidence="8">
    <location>
        <begin position="58"/>
        <end position="68"/>
    </location>
</feature>
<feature type="strand" evidence="8">
    <location>
        <begin position="70"/>
        <end position="79"/>
    </location>
</feature>
<feature type="turn" evidence="8">
    <location>
        <begin position="81"/>
        <end position="84"/>
    </location>
</feature>
<feature type="strand" evidence="8">
    <location>
        <begin position="85"/>
        <end position="92"/>
    </location>
</feature>
<feature type="turn" evidence="8">
    <location>
        <begin position="93"/>
        <end position="95"/>
    </location>
</feature>
<feature type="strand" evidence="8">
    <location>
        <begin position="96"/>
        <end position="99"/>
    </location>
</feature>
<feature type="strand" evidence="8">
    <location>
        <begin position="103"/>
        <end position="110"/>
    </location>
</feature>
<feature type="strand" evidence="8">
    <location>
        <begin position="113"/>
        <end position="118"/>
    </location>
</feature>
<feature type="strand" evidence="8">
    <location>
        <begin position="132"/>
        <end position="138"/>
    </location>
</feature>
<feature type="turn" evidence="8">
    <location>
        <begin position="139"/>
        <end position="141"/>
    </location>
</feature>
<feature type="strand" evidence="8">
    <location>
        <begin position="142"/>
        <end position="148"/>
    </location>
</feature>
<protein>
    <recommendedName>
        <fullName>Transmembrane protein PVRIG</fullName>
    </recommendedName>
    <alternativeName>
        <fullName>CD112 receptor</fullName>
        <shortName>CD112R</shortName>
    </alternativeName>
    <alternativeName>
        <fullName>Poliovirus receptor-related immunoglobulin domain-containing protein</fullName>
    </alternativeName>
</protein>